<keyword id="KW-0963">Cytoplasm</keyword>
<keyword id="KW-0418">Kinase</keyword>
<keyword id="KW-0597">Phosphoprotein</keyword>
<keyword id="KW-0598">Phosphotransferase system</keyword>
<keyword id="KW-1185">Reference proteome</keyword>
<keyword id="KW-0762">Sugar transport</keyword>
<keyword id="KW-0808">Transferase</keyword>
<keyword id="KW-0813">Transport</keyword>
<organism>
    <name type="scientific">Escherichia coli O6:H1 (strain CFT073 / ATCC 700928 / UPEC)</name>
    <dbReference type="NCBI Taxonomy" id="199310"/>
    <lineage>
        <taxon>Bacteria</taxon>
        <taxon>Pseudomonadati</taxon>
        <taxon>Pseudomonadota</taxon>
        <taxon>Gammaproteobacteria</taxon>
        <taxon>Enterobacterales</taxon>
        <taxon>Enterobacteriaceae</taxon>
        <taxon>Escherichia</taxon>
    </lineage>
</organism>
<sequence length="106" mass="11248">MTKIIAVTACPSGVAHTYMAAEALESAAKAKGWEVKVETQGSIGLENELTAEDVASADMVILTKDIGIKFEERFAGKTIVRVNISDAVKRADAIMSKIEAHLAQTA</sequence>
<protein>
    <recommendedName>
        <fullName evidence="1">PTS system fructose-like EIIB component 2</fullName>
        <ecNumber evidence="1">2.7.1.202</ecNumber>
    </recommendedName>
    <alternativeName>
        <fullName evidence="1">Fructose-like phosphotransferase enzyme IIB componet 2</fullName>
    </alternativeName>
</protein>
<accession>P69817</accession>
<accession>P32673</accession>
<gene>
    <name type="primary">frwB</name>
    <name type="ordered locus">c4908</name>
</gene>
<proteinExistence type="inferred from homology"/>
<dbReference type="EC" id="2.7.1.202" evidence="1"/>
<dbReference type="EMBL" id="AE014075">
    <property type="protein sequence ID" value="AAN83336.1"/>
    <property type="molecule type" value="Genomic_DNA"/>
</dbReference>
<dbReference type="RefSeq" id="WP_000161265.1">
    <property type="nucleotide sequence ID" value="NZ_CP051263.1"/>
</dbReference>
<dbReference type="SMR" id="P69817"/>
<dbReference type="STRING" id="199310.c4908"/>
<dbReference type="KEGG" id="ecc:c4908"/>
<dbReference type="eggNOG" id="COG1445">
    <property type="taxonomic scope" value="Bacteria"/>
</dbReference>
<dbReference type="HOGENOM" id="CLU_013155_2_1_6"/>
<dbReference type="BioCyc" id="ECOL199310:C4908-MONOMER"/>
<dbReference type="Proteomes" id="UP000001410">
    <property type="component" value="Chromosome"/>
</dbReference>
<dbReference type="GO" id="GO:0005737">
    <property type="term" value="C:cytoplasm"/>
    <property type="evidence" value="ECO:0007669"/>
    <property type="project" value="UniProtKB-SubCell"/>
</dbReference>
<dbReference type="GO" id="GO:0005886">
    <property type="term" value="C:plasma membrane"/>
    <property type="evidence" value="ECO:0007669"/>
    <property type="project" value="TreeGrafter"/>
</dbReference>
<dbReference type="GO" id="GO:0016301">
    <property type="term" value="F:kinase activity"/>
    <property type="evidence" value="ECO:0007669"/>
    <property type="project" value="UniProtKB-KW"/>
</dbReference>
<dbReference type="GO" id="GO:0022877">
    <property type="term" value="F:protein-N(PI)-phosphohistidine-fructose phosphotransferase system transporter activity"/>
    <property type="evidence" value="ECO:0007669"/>
    <property type="project" value="InterPro"/>
</dbReference>
<dbReference type="GO" id="GO:0090582">
    <property type="term" value="F:protein-phosphocysteine-D-fructose-phosphotransferase system transporter activity"/>
    <property type="evidence" value="ECO:0000250"/>
    <property type="project" value="UniProtKB"/>
</dbReference>
<dbReference type="GO" id="GO:0009401">
    <property type="term" value="P:phosphoenolpyruvate-dependent sugar phosphotransferase system"/>
    <property type="evidence" value="ECO:0000250"/>
    <property type="project" value="UniProtKB"/>
</dbReference>
<dbReference type="CDD" id="cd05569">
    <property type="entry name" value="PTS_IIB_fructose"/>
    <property type="match status" value="1"/>
</dbReference>
<dbReference type="FunFam" id="3.40.50.2300:FF:000014">
    <property type="entry name" value="PTS system fructose-like transporter subunit IIB"/>
    <property type="match status" value="1"/>
</dbReference>
<dbReference type="Gene3D" id="3.40.50.2300">
    <property type="match status" value="1"/>
</dbReference>
<dbReference type="InterPro" id="IPR050864">
    <property type="entry name" value="Bacterial_PTS_Sugar_Transport"/>
</dbReference>
<dbReference type="InterPro" id="IPR036095">
    <property type="entry name" value="PTS_EIIB-like_sf"/>
</dbReference>
<dbReference type="InterPro" id="IPR013011">
    <property type="entry name" value="PTS_EIIB_2"/>
</dbReference>
<dbReference type="InterPro" id="IPR003501">
    <property type="entry name" value="PTS_EIIB_2/3"/>
</dbReference>
<dbReference type="InterPro" id="IPR003353">
    <property type="entry name" value="PTS_IIB_fruc"/>
</dbReference>
<dbReference type="NCBIfam" id="TIGR00829">
    <property type="entry name" value="FRU"/>
    <property type="match status" value="1"/>
</dbReference>
<dbReference type="NCBIfam" id="NF007783">
    <property type="entry name" value="PRK10474.1"/>
    <property type="match status" value="1"/>
</dbReference>
<dbReference type="PANTHER" id="PTHR30505">
    <property type="entry name" value="FRUCTOSE-LIKE PERMEASE"/>
    <property type="match status" value="1"/>
</dbReference>
<dbReference type="PANTHER" id="PTHR30505:SF0">
    <property type="entry name" value="FRUCTOSE-LIKE PTS SYSTEM EIIBC COMPONENT-RELATED"/>
    <property type="match status" value="1"/>
</dbReference>
<dbReference type="Pfam" id="PF02302">
    <property type="entry name" value="PTS_IIB"/>
    <property type="match status" value="1"/>
</dbReference>
<dbReference type="SUPFAM" id="SSF52794">
    <property type="entry name" value="PTS system IIB component-like"/>
    <property type="match status" value="1"/>
</dbReference>
<dbReference type="PROSITE" id="PS51099">
    <property type="entry name" value="PTS_EIIB_TYPE_2"/>
    <property type="match status" value="1"/>
</dbReference>
<comment type="function">
    <text evidence="1">The phosphoenolpyruvate-dependent sugar phosphotransferase system (sugar PTS), a major carbohydrate active transport system, catalyzes the phosphorylation of incoming sugar substrates concomitantly with their translocation across the cell membrane. The enzyme II FrwABC PTS system is involved in fructose transport.</text>
</comment>
<comment type="catalytic activity">
    <reaction evidence="1">
        <text>D-fructose(out) + N(pros)-phospho-L-histidyl-[protein] = D-fructose 1-phosphate(in) + L-histidyl-[protein]</text>
        <dbReference type="Rhea" id="RHEA:49252"/>
        <dbReference type="Rhea" id="RHEA-COMP:9745"/>
        <dbReference type="Rhea" id="RHEA-COMP:9746"/>
        <dbReference type="ChEBI" id="CHEBI:29979"/>
        <dbReference type="ChEBI" id="CHEBI:37721"/>
        <dbReference type="ChEBI" id="CHEBI:58674"/>
        <dbReference type="ChEBI" id="CHEBI:64837"/>
        <dbReference type="EC" id="2.7.1.202"/>
    </reaction>
</comment>
<comment type="subcellular location">
    <subcellularLocation>
        <location evidence="3">Cytoplasm</location>
    </subcellularLocation>
</comment>
<comment type="domain">
    <text evidence="2">The PTS EIIB type-2 domain is phosphorylated by phospho-EIIA on a cysteinyl residue. Then, it transfers the phosphoryl group to the sugar substrate concomitantly with the sugar uptake processed by the PTS EIIC type-2 domain.</text>
</comment>
<reference key="1">
    <citation type="journal article" date="2002" name="Proc. Natl. Acad. Sci. U.S.A.">
        <title>Extensive mosaic structure revealed by the complete genome sequence of uropathogenic Escherichia coli.</title>
        <authorList>
            <person name="Welch R.A."/>
            <person name="Burland V."/>
            <person name="Plunkett G. III"/>
            <person name="Redford P."/>
            <person name="Roesch P."/>
            <person name="Rasko D."/>
            <person name="Buckles E.L."/>
            <person name="Liou S.-R."/>
            <person name="Boutin A."/>
            <person name="Hackett J."/>
            <person name="Stroud D."/>
            <person name="Mayhew G.F."/>
            <person name="Rose D.J."/>
            <person name="Zhou S."/>
            <person name="Schwartz D.C."/>
            <person name="Perna N.T."/>
            <person name="Mobley H.L.T."/>
            <person name="Donnenberg M.S."/>
            <person name="Blattner F.R."/>
        </authorList>
    </citation>
    <scope>NUCLEOTIDE SEQUENCE [LARGE SCALE GENOMIC DNA]</scope>
    <source>
        <strain>CFT073 / ATCC 700928 / UPEC</strain>
    </source>
</reference>
<name>PTFB2_ECOL6</name>
<evidence type="ECO:0000250" key="1">
    <source>
        <dbReference type="UniProtKB" id="P20966"/>
    </source>
</evidence>
<evidence type="ECO:0000255" key="2">
    <source>
        <dbReference type="PROSITE-ProRule" id="PRU00422"/>
    </source>
</evidence>
<evidence type="ECO:0000305" key="3"/>
<feature type="chain" id="PRO_0000186502" description="PTS system fructose-like EIIB component 2">
    <location>
        <begin position="1"/>
        <end position="106"/>
    </location>
</feature>
<feature type="domain" description="PTS EIIB type-2" evidence="2">
    <location>
        <begin position="1"/>
        <end position="103"/>
    </location>
</feature>
<feature type="active site" description="Phosphocysteine intermediate" evidence="1 3">
    <location>
        <position position="10"/>
    </location>
</feature>
<feature type="modified residue" description="Phosphocysteine; by EIIA" evidence="2">
    <location>
        <position position="10"/>
    </location>
</feature>